<evidence type="ECO:0000255" key="1">
    <source>
        <dbReference type="HAMAP-Rule" id="MF_00201"/>
    </source>
</evidence>
<dbReference type="EMBL" id="CP000744">
    <property type="protein sequence ID" value="ABR82607.1"/>
    <property type="molecule type" value="Genomic_DNA"/>
</dbReference>
<dbReference type="RefSeq" id="WP_003150223.1">
    <property type="nucleotide sequence ID" value="NC_009656.1"/>
</dbReference>
<dbReference type="SMR" id="A6VAK4"/>
<dbReference type="KEGG" id="pap:PSPA7_4747"/>
<dbReference type="HOGENOM" id="CLU_066645_1_0_6"/>
<dbReference type="Proteomes" id="UP000001582">
    <property type="component" value="Chromosome"/>
</dbReference>
<dbReference type="GO" id="GO:0043590">
    <property type="term" value="C:bacterial nucleoid"/>
    <property type="evidence" value="ECO:0007669"/>
    <property type="project" value="TreeGrafter"/>
</dbReference>
<dbReference type="GO" id="GO:0006310">
    <property type="term" value="P:DNA recombination"/>
    <property type="evidence" value="ECO:0007669"/>
    <property type="project" value="UniProtKB-UniRule"/>
</dbReference>
<dbReference type="GO" id="GO:0006302">
    <property type="term" value="P:double-strand break repair"/>
    <property type="evidence" value="ECO:0007669"/>
    <property type="project" value="TreeGrafter"/>
</dbReference>
<dbReference type="Gene3D" id="2.40.50.140">
    <property type="entry name" value="Nucleic acid-binding proteins"/>
    <property type="match status" value="1"/>
</dbReference>
<dbReference type="Gene3D" id="1.20.1440.120">
    <property type="entry name" value="Recombination protein O, C-terminal domain"/>
    <property type="match status" value="1"/>
</dbReference>
<dbReference type="HAMAP" id="MF_00201">
    <property type="entry name" value="RecO"/>
    <property type="match status" value="1"/>
</dbReference>
<dbReference type="InterPro" id="IPR037278">
    <property type="entry name" value="ARFGAP/RecO"/>
</dbReference>
<dbReference type="InterPro" id="IPR022572">
    <property type="entry name" value="DNA_rep/recomb_RecO_N"/>
</dbReference>
<dbReference type="InterPro" id="IPR012340">
    <property type="entry name" value="NA-bd_OB-fold"/>
</dbReference>
<dbReference type="InterPro" id="IPR003717">
    <property type="entry name" value="RecO"/>
</dbReference>
<dbReference type="InterPro" id="IPR042242">
    <property type="entry name" value="RecO_C"/>
</dbReference>
<dbReference type="NCBIfam" id="TIGR00613">
    <property type="entry name" value="reco"/>
    <property type="match status" value="1"/>
</dbReference>
<dbReference type="PANTHER" id="PTHR33991">
    <property type="entry name" value="DNA REPAIR PROTEIN RECO"/>
    <property type="match status" value="1"/>
</dbReference>
<dbReference type="PANTHER" id="PTHR33991:SF1">
    <property type="entry name" value="DNA REPAIR PROTEIN RECO"/>
    <property type="match status" value="1"/>
</dbReference>
<dbReference type="Pfam" id="PF02565">
    <property type="entry name" value="RecO_C"/>
    <property type="match status" value="1"/>
</dbReference>
<dbReference type="Pfam" id="PF11967">
    <property type="entry name" value="RecO_N"/>
    <property type="match status" value="1"/>
</dbReference>
<dbReference type="SUPFAM" id="SSF57863">
    <property type="entry name" value="ArfGap/RecO-like zinc finger"/>
    <property type="match status" value="1"/>
</dbReference>
<dbReference type="SUPFAM" id="SSF50249">
    <property type="entry name" value="Nucleic acid-binding proteins"/>
    <property type="match status" value="1"/>
</dbReference>
<organism>
    <name type="scientific">Pseudomonas paraeruginosa (strain DSM 24068 / PA7)</name>
    <name type="common">Pseudomonas aeruginosa (strain PA7)</name>
    <dbReference type="NCBI Taxonomy" id="381754"/>
    <lineage>
        <taxon>Bacteria</taxon>
        <taxon>Pseudomonadati</taxon>
        <taxon>Pseudomonadota</taxon>
        <taxon>Gammaproteobacteria</taxon>
        <taxon>Pseudomonadales</taxon>
        <taxon>Pseudomonadaceae</taxon>
        <taxon>Pseudomonas</taxon>
        <taxon>Pseudomonas paraeruginosa</taxon>
    </lineage>
</organism>
<name>RECO_PSEP7</name>
<protein>
    <recommendedName>
        <fullName evidence="1">DNA repair protein RecO</fullName>
    </recommendedName>
    <alternativeName>
        <fullName evidence="1">Recombination protein O</fullName>
    </alternativeName>
</protein>
<comment type="function">
    <text evidence="1">Involved in DNA repair and RecF pathway recombination.</text>
</comment>
<comment type="similarity">
    <text evidence="1">Belongs to the RecO family.</text>
</comment>
<keyword id="KW-0227">DNA damage</keyword>
<keyword id="KW-0233">DNA recombination</keyword>
<keyword id="KW-0234">DNA repair</keyword>
<reference key="1">
    <citation type="submission" date="2007-06" db="EMBL/GenBank/DDBJ databases">
        <authorList>
            <person name="Dodson R.J."/>
            <person name="Harkins D."/>
            <person name="Paulsen I.T."/>
        </authorList>
    </citation>
    <scope>NUCLEOTIDE SEQUENCE [LARGE SCALE GENOMIC DNA]</scope>
    <source>
        <strain>DSM 24068 / PA7</strain>
    </source>
</reference>
<sequence>MTFAAAQATYVLHSRPYKETSALVDFFTAQGRLRAVLRGARGKAGALARPFVPLEAEWRGRGELKTVARLESAGIPNLLSGQALFSGLYLNELLIRLLPAEDPQPEIFAHYAATLPLLAAGRPLEPLLRAFEWRLLEQLGYGFALDVDIHGRPIEPQALYQLLPEAGLEPVTQLQPGLFQGVELLSMADADWSAPGALAAAKRLMRQALAPHLGGRPLVSRELFMNRKESPRD</sequence>
<feature type="chain" id="PRO_1000012147" description="DNA repair protein RecO">
    <location>
        <begin position="1"/>
        <end position="233"/>
    </location>
</feature>
<gene>
    <name evidence="1" type="primary">recO</name>
    <name type="ordered locus">PSPA7_4747</name>
</gene>
<accession>A6VAK4</accession>
<proteinExistence type="inferred from homology"/>